<keyword id="KW-0472">Membrane</keyword>
<keyword id="KW-1185">Reference proteome</keyword>
<keyword id="KW-0812">Transmembrane</keyword>
<keyword id="KW-1133">Transmembrane helix</keyword>
<organism>
    <name type="scientific">Saccharomyces cerevisiae (strain ATCC 204508 / S288c)</name>
    <name type="common">Baker's yeast</name>
    <dbReference type="NCBI Taxonomy" id="559292"/>
    <lineage>
        <taxon>Eukaryota</taxon>
        <taxon>Fungi</taxon>
        <taxon>Dikarya</taxon>
        <taxon>Ascomycota</taxon>
        <taxon>Saccharomycotina</taxon>
        <taxon>Saccharomycetes</taxon>
        <taxon>Saccharomycetales</taxon>
        <taxon>Saccharomycetaceae</taxon>
        <taxon>Saccharomyces</taxon>
    </lineage>
</organism>
<comment type="subcellular location">
    <subcellularLocation>
        <location evidence="2">Membrane</location>
        <topology evidence="2">Single-pass membrane protein</topology>
    </subcellularLocation>
</comment>
<reference key="1">
    <citation type="journal article" date="1997" name="Nature">
        <title>The nucleotide sequence of Saccharomyces cerevisiae chromosome XVI.</title>
        <authorList>
            <person name="Bussey H."/>
            <person name="Storms R.K."/>
            <person name="Ahmed A."/>
            <person name="Albermann K."/>
            <person name="Allen E."/>
            <person name="Ansorge W."/>
            <person name="Araujo R."/>
            <person name="Aparicio A."/>
            <person name="Barrell B.G."/>
            <person name="Badcock K."/>
            <person name="Benes V."/>
            <person name="Botstein D."/>
            <person name="Bowman S."/>
            <person name="Brueckner M."/>
            <person name="Carpenter J."/>
            <person name="Cherry J.M."/>
            <person name="Chung E."/>
            <person name="Churcher C.M."/>
            <person name="Coster F."/>
            <person name="Davis K."/>
            <person name="Davis R.W."/>
            <person name="Dietrich F.S."/>
            <person name="Delius H."/>
            <person name="DiPaolo T."/>
            <person name="Dubois E."/>
            <person name="Duesterhoeft A."/>
            <person name="Duncan M."/>
            <person name="Floeth M."/>
            <person name="Fortin N."/>
            <person name="Friesen J.D."/>
            <person name="Fritz C."/>
            <person name="Goffeau A."/>
            <person name="Hall J."/>
            <person name="Hebling U."/>
            <person name="Heumann K."/>
            <person name="Hilbert H."/>
            <person name="Hillier L.W."/>
            <person name="Hunicke-Smith S."/>
            <person name="Hyman R.W."/>
            <person name="Johnston M."/>
            <person name="Kalman S."/>
            <person name="Kleine K."/>
            <person name="Komp C."/>
            <person name="Kurdi O."/>
            <person name="Lashkari D."/>
            <person name="Lew H."/>
            <person name="Lin A."/>
            <person name="Lin D."/>
            <person name="Louis E.J."/>
            <person name="Marathe R."/>
            <person name="Messenguy F."/>
            <person name="Mewes H.-W."/>
            <person name="Mirtipati S."/>
            <person name="Moestl D."/>
            <person name="Mueller-Auer S."/>
            <person name="Namath A."/>
            <person name="Nentwich U."/>
            <person name="Oefner P."/>
            <person name="Pearson D."/>
            <person name="Petel F.X."/>
            <person name="Pohl T.M."/>
            <person name="Purnelle B."/>
            <person name="Rajandream M.A."/>
            <person name="Rechmann S."/>
            <person name="Rieger M."/>
            <person name="Riles L."/>
            <person name="Roberts D."/>
            <person name="Schaefer M."/>
            <person name="Scharfe M."/>
            <person name="Scherens B."/>
            <person name="Schramm S."/>
            <person name="Schroeder M."/>
            <person name="Sdicu A.-M."/>
            <person name="Tettelin H."/>
            <person name="Urrestarazu L.A."/>
            <person name="Ushinsky S."/>
            <person name="Vierendeels F."/>
            <person name="Vissers S."/>
            <person name="Voss H."/>
            <person name="Walsh S.V."/>
            <person name="Wambutt R."/>
            <person name="Wang Y."/>
            <person name="Wedler E."/>
            <person name="Wedler H."/>
            <person name="Winnett E."/>
            <person name="Zhong W.-W."/>
            <person name="Zollner A."/>
            <person name="Vo D.H."/>
            <person name="Hani J."/>
        </authorList>
    </citation>
    <scope>NUCLEOTIDE SEQUENCE [LARGE SCALE GENOMIC DNA]</scope>
    <source>
        <strain>ATCC 204508 / S288c</strain>
    </source>
</reference>
<reference key="2">
    <citation type="journal article" date="2014" name="G3 (Bethesda)">
        <title>The reference genome sequence of Saccharomyces cerevisiae: Then and now.</title>
        <authorList>
            <person name="Engel S.R."/>
            <person name="Dietrich F.S."/>
            <person name="Fisk D.G."/>
            <person name="Binkley G."/>
            <person name="Balakrishnan R."/>
            <person name="Costanzo M.C."/>
            <person name="Dwight S.S."/>
            <person name="Hitz B.C."/>
            <person name="Karra K."/>
            <person name="Nash R.S."/>
            <person name="Weng S."/>
            <person name="Wong E.D."/>
            <person name="Lloyd P."/>
            <person name="Skrzypek M.S."/>
            <person name="Miyasato S.R."/>
            <person name="Simison M."/>
            <person name="Cherry J.M."/>
        </authorList>
    </citation>
    <scope>GENOME REANNOTATION</scope>
    <source>
        <strain>ATCC 204508 / S288c</strain>
    </source>
</reference>
<reference key="3">
    <citation type="journal article" date="2002" name="Genome Res.">
        <title>Parallel identification of new genes in Saccharomyces cerevisiae.</title>
        <authorList>
            <person name="Oshiro G."/>
            <person name="Wodicka L.M."/>
            <person name="Washburn M.P."/>
            <person name="Yates J.R. III"/>
            <person name="Lockhart D.J."/>
            <person name="Winzeler E.A."/>
        </authorList>
    </citation>
    <scope>IDENTIFICATION</scope>
    <scope>IDENTIFICATION BY MASS SPECTROMETRY</scope>
</reference>
<proteinExistence type="evidence at protein level"/>
<evidence type="ECO:0000255" key="1"/>
<evidence type="ECO:0000305" key="2"/>
<name>YP119_YEAST</name>
<sequence length="87" mass="10112">MHPLVDELTLSRYLTHGTSVLSSSLYSVAFFLFFFPNFLFFCSCPNHKWVSLPFIGMDILEALCFYREGKIRNIFEIGGLLLQSFYN</sequence>
<accession>Q3E751</accession>
<accession>D6W3P8</accession>
<gene>
    <name type="ordered locus">YPL119C-A</name>
</gene>
<dbReference type="EMBL" id="U43503">
    <property type="status" value="NOT_ANNOTATED_CDS"/>
    <property type="molecule type" value="Genomic_DNA"/>
</dbReference>
<dbReference type="EMBL" id="BK006949">
    <property type="protein sequence ID" value="DAA11314.1"/>
    <property type="molecule type" value="Genomic_DNA"/>
</dbReference>
<dbReference type="RefSeq" id="NP_878181.1">
    <property type="nucleotide sequence ID" value="NM_001184670.1"/>
</dbReference>
<dbReference type="BioGRID" id="37062">
    <property type="interactions" value="33"/>
</dbReference>
<dbReference type="FunCoup" id="Q3E751">
    <property type="interactions" value="5"/>
</dbReference>
<dbReference type="STRING" id="4932.YPL119C-A"/>
<dbReference type="PaxDb" id="4932-YPL119C-A"/>
<dbReference type="EnsemblFungi" id="YPL119C-A_mRNA">
    <property type="protein sequence ID" value="YPL119C-A"/>
    <property type="gene ID" value="YPL119C-A"/>
</dbReference>
<dbReference type="GeneID" id="1466520"/>
<dbReference type="KEGG" id="sce:YPL119C-A"/>
<dbReference type="AGR" id="SGD:S000028859"/>
<dbReference type="SGD" id="S000028859">
    <property type="gene designation" value="YPL119C-A"/>
</dbReference>
<dbReference type="VEuPathDB" id="FungiDB:YPL119C-A"/>
<dbReference type="HOGENOM" id="CLU_2484587_0_0_1"/>
<dbReference type="InParanoid" id="Q3E751"/>
<dbReference type="BioCyc" id="YEAST:G3O-34368-MONOMER"/>
<dbReference type="PRO" id="PR:Q3E751"/>
<dbReference type="Proteomes" id="UP000002311">
    <property type="component" value="Chromosome XVI"/>
</dbReference>
<dbReference type="RNAct" id="Q3E751">
    <property type="molecule type" value="protein"/>
</dbReference>
<dbReference type="GO" id="GO:0016020">
    <property type="term" value="C:membrane"/>
    <property type="evidence" value="ECO:0007669"/>
    <property type="project" value="UniProtKB-SubCell"/>
</dbReference>
<feature type="chain" id="PRO_0000238648" description="Uncharacterized protein YPL119C-A">
    <location>
        <begin position="1"/>
        <end position="87"/>
    </location>
</feature>
<feature type="transmembrane region" description="Helical" evidence="1">
    <location>
        <begin position="21"/>
        <end position="41"/>
    </location>
</feature>
<protein>
    <recommendedName>
        <fullName>Uncharacterized protein YPL119C-A</fullName>
    </recommendedName>
</protein>